<reference key="1">
    <citation type="journal article" date="2009" name="PLoS Genet.">
        <title>Organised genome dynamics in the Escherichia coli species results in highly diverse adaptive paths.</title>
        <authorList>
            <person name="Touchon M."/>
            <person name="Hoede C."/>
            <person name="Tenaillon O."/>
            <person name="Barbe V."/>
            <person name="Baeriswyl S."/>
            <person name="Bidet P."/>
            <person name="Bingen E."/>
            <person name="Bonacorsi S."/>
            <person name="Bouchier C."/>
            <person name="Bouvet O."/>
            <person name="Calteau A."/>
            <person name="Chiapello H."/>
            <person name="Clermont O."/>
            <person name="Cruveiller S."/>
            <person name="Danchin A."/>
            <person name="Diard M."/>
            <person name="Dossat C."/>
            <person name="Karoui M.E."/>
            <person name="Frapy E."/>
            <person name="Garry L."/>
            <person name="Ghigo J.M."/>
            <person name="Gilles A.M."/>
            <person name="Johnson J."/>
            <person name="Le Bouguenec C."/>
            <person name="Lescat M."/>
            <person name="Mangenot S."/>
            <person name="Martinez-Jehanne V."/>
            <person name="Matic I."/>
            <person name="Nassif X."/>
            <person name="Oztas S."/>
            <person name="Petit M.A."/>
            <person name="Pichon C."/>
            <person name="Rouy Z."/>
            <person name="Ruf C.S."/>
            <person name="Schneider D."/>
            <person name="Tourret J."/>
            <person name="Vacherie B."/>
            <person name="Vallenet D."/>
            <person name="Medigue C."/>
            <person name="Rocha E.P.C."/>
            <person name="Denamur E."/>
        </authorList>
    </citation>
    <scope>NUCLEOTIDE SEQUENCE [LARGE SCALE GENOMIC DNA]</scope>
    <source>
        <strain>IAI39 / ExPEC</strain>
    </source>
</reference>
<feature type="chain" id="PRO_1000119546" description="1-deoxy-D-xylulose-5-phosphate synthase">
    <location>
        <begin position="1"/>
        <end position="620"/>
    </location>
</feature>
<feature type="binding site" evidence="1">
    <location>
        <position position="80"/>
    </location>
    <ligand>
        <name>thiamine diphosphate</name>
        <dbReference type="ChEBI" id="CHEBI:58937"/>
    </ligand>
</feature>
<feature type="binding site" evidence="1">
    <location>
        <begin position="121"/>
        <end position="123"/>
    </location>
    <ligand>
        <name>thiamine diphosphate</name>
        <dbReference type="ChEBI" id="CHEBI:58937"/>
    </ligand>
</feature>
<feature type="binding site" evidence="1">
    <location>
        <position position="152"/>
    </location>
    <ligand>
        <name>Mg(2+)</name>
        <dbReference type="ChEBI" id="CHEBI:18420"/>
    </ligand>
</feature>
<feature type="binding site" evidence="1">
    <location>
        <begin position="153"/>
        <end position="154"/>
    </location>
    <ligand>
        <name>thiamine diphosphate</name>
        <dbReference type="ChEBI" id="CHEBI:58937"/>
    </ligand>
</feature>
<feature type="binding site" evidence="1">
    <location>
        <position position="181"/>
    </location>
    <ligand>
        <name>Mg(2+)</name>
        <dbReference type="ChEBI" id="CHEBI:18420"/>
    </ligand>
</feature>
<feature type="binding site" evidence="1">
    <location>
        <position position="181"/>
    </location>
    <ligand>
        <name>thiamine diphosphate</name>
        <dbReference type="ChEBI" id="CHEBI:58937"/>
    </ligand>
</feature>
<feature type="binding site" evidence="1">
    <location>
        <position position="288"/>
    </location>
    <ligand>
        <name>thiamine diphosphate</name>
        <dbReference type="ChEBI" id="CHEBI:58937"/>
    </ligand>
</feature>
<feature type="binding site" evidence="1">
    <location>
        <position position="370"/>
    </location>
    <ligand>
        <name>thiamine diphosphate</name>
        <dbReference type="ChEBI" id="CHEBI:58937"/>
    </ligand>
</feature>
<dbReference type="EC" id="2.2.1.7" evidence="1"/>
<dbReference type="EMBL" id="CU928164">
    <property type="protein sequence ID" value="CAR16396.1"/>
    <property type="molecule type" value="Genomic_DNA"/>
</dbReference>
<dbReference type="RefSeq" id="WP_000006816.1">
    <property type="nucleotide sequence ID" value="NC_011750.1"/>
</dbReference>
<dbReference type="RefSeq" id="YP_002406300.1">
    <property type="nucleotide sequence ID" value="NC_011750.1"/>
</dbReference>
<dbReference type="SMR" id="B7NJ77"/>
<dbReference type="STRING" id="585057.ECIAI39_0256"/>
<dbReference type="KEGG" id="ect:ECIAI39_0256"/>
<dbReference type="PATRIC" id="fig|585057.6.peg.278"/>
<dbReference type="HOGENOM" id="CLU_009227_1_4_6"/>
<dbReference type="UniPathway" id="UPA00064">
    <property type="reaction ID" value="UER00091"/>
</dbReference>
<dbReference type="Proteomes" id="UP000000749">
    <property type="component" value="Chromosome"/>
</dbReference>
<dbReference type="GO" id="GO:0005829">
    <property type="term" value="C:cytosol"/>
    <property type="evidence" value="ECO:0007669"/>
    <property type="project" value="TreeGrafter"/>
</dbReference>
<dbReference type="GO" id="GO:0008661">
    <property type="term" value="F:1-deoxy-D-xylulose-5-phosphate synthase activity"/>
    <property type="evidence" value="ECO:0007669"/>
    <property type="project" value="UniProtKB-UniRule"/>
</dbReference>
<dbReference type="GO" id="GO:0000287">
    <property type="term" value="F:magnesium ion binding"/>
    <property type="evidence" value="ECO:0007669"/>
    <property type="project" value="UniProtKB-UniRule"/>
</dbReference>
<dbReference type="GO" id="GO:0030976">
    <property type="term" value="F:thiamine pyrophosphate binding"/>
    <property type="evidence" value="ECO:0007669"/>
    <property type="project" value="UniProtKB-UniRule"/>
</dbReference>
<dbReference type="GO" id="GO:0052865">
    <property type="term" value="P:1-deoxy-D-xylulose 5-phosphate biosynthetic process"/>
    <property type="evidence" value="ECO:0007669"/>
    <property type="project" value="UniProtKB-UniPathway"/>
</dbReference>
<dbReference type="GO" id="GO:0019288">
    <property type="term" value="P:isopentenyl diphosphate biosynthetic process, methylerythritol 4-phosphate pathway"/>
    <property type="evidence" value="ECO:0007669"/>
    <property type="project" value="TreeGrafter"/>
</dbReference>
<dbReference type="GO" id="GO:0016114">
    <property type="term" value="P:terpenoid biosynthetic process"/>
    <property type="evidence" value="ECO:0007669"/>
    <property type="project" value="UniProtKB-UniRule"/>
</dbReference>
<dbReference type="GO" id="GO:0009228">
    <property type="term" value="P:thiamine biosynthetic process"/>
    <property type="evidence" value="ECO:0007669"/>
    <property type="project" value="UniProtKB-UniRule"/>
</dbReference>
<dbReference type="CDD" id="cd02007">
    <property type="entry name" value="TPP_DXS"/>
    <property type="match status" value="1"/>
</dbReference>
<dbReference type="CDD" id="cd07033">
    <property type="entry name" value="TPP_PYR_DXS_TK_like"/>
    <property type="match status" value="1"/>
</dbReference>
<dbReference type="FunFam" id="3.40.50.920:FF:000002">
    <property type="entry name" value="1-deoxy-D-xylulose-5-phosphate synthase"/>
    <property type="match status" value="1"/>
</dbReference>
<dbReference type="FunFam" id="3.40.50.970:FF:000005">
    <property type="entry name" value="1-deoxy-D-xylulose-5-phosphate synthase"/>
    <property type="match status" value="1"/>
</dbReference>
<dbReference type="Gene3D" id="3.40.50.920">
    <property type="match status" value="1"/>
</dbReference>
<dbReference type="Gene3D" id="3.40.50.970">
    <property type="match status" value="2"/>
</dbReference>
<dbReference type="HAMAP" id="MF_00315">
    <property type="entry name" value="DXP_synth"/>
    <property type="match status" value="1"/>
</dbReference>
<dbReference type="InterPro" id="IPR005477">
    <property type="entry name" value="Dxylulose-5-P_synthase"/>
</dbReference>
<dbReference type="InterPro" id="IPR029061">
    <property type="entry name" value="THDP-binding"/>
</dbReference>
<dbReference type="InterPro" id="IPR009014">
    <property type="entry name" value="Transketo_C/PFOR_II"/>
</dbReference>
<dbReference type="InterPro" id="IPR005475">
    <property type="entry name" value="Transketolase-like_Pyr-bd"/>
</dbReference>
<dbReference type="InterPro" id="IPR020826">
    <property type="entry name" value="Transketolase_BS"/>
</dbReference>
<dbReference type="InterPro" id="IPR033248">
    <property type="entry name" value="Transketolase_C"/>
</dbReference>
<dbReference type="InterPro" id="IPR049557">
    <property type="entry name" value="Transketolase_CS"/>
</dbReference>
<dbReference type="NCBIfam" id="TIGR00204">
    <property type="entry name" value="dxs"/>
    <property type="match status" value="1"/>
</dbReference>
<dbReference type="NCBIfam" id="NF003933">
    <property type="entry name" value="PRK05444.2-2"/>
    <property type="match status" value="1"/>
</dbReference>
<dbReference type="PANTHER" id="PTHR43322">
    <property type="entry name" value="1-D-DEOXYXYLULOSE 5-PHOSPHATE SYNTHASE-RELATED"/>
    <property type="match status" value="1"/>
</dbReference>
<dbReference type="PANTHER" id="PTHR43322:SF5">
    <property type="entry name" value="1-DEOXY-D-XYLULOSE-5-PHOSPHATE SYNTHASE, CHLOROPLASTIC"/>
    <property type="match status" value="1"/>
</dbReference>
<dbReference type="Pfam" id="PF13292">
    <property type="entry name" value="DXP_synthase_N"/>
    <property type="match status" value="1"/>
</dbReference>
<dbReference type="Pfam" id="PF02779">
    <property type="entry name" value="Transket_pyr"/>
    <property type="match status" value="1"/>
</dbReference>
<dbReference type="Pfam" id="PF02780">
    <property type="entry name" value="Transketolase_C"/>
    <property type="match status" value="1"/>
</dbReference>
<dbReference type="SMART" id="SM00861">
    <property type="entry name" value="Transket_pyr"/>
    <property type="match status" value="1"/>
</dbReference>
<dbReference type="SUPFAM" id="SSF52518">
    <property type="entry name" value="Thiamin diphosphate-binding fold (THDP-binding)"/>
    <property type="match status" value="2"/>
</dbReference>
<dbReference type="SUPFAM" id="SSF52922">
    <property type="entry name" value="TK C-terminal domain-like"/>
    <property type="match status" value="1"/>
</dbReference>
<dbReference type="PROSITE" id="PS00801">
    <property type="entry name" value="TRANSKETOLASE_1"/>
    <property type="match status" value="1"/>
</dbReference>
<dbReference type="PROSITE" id="PS00802">
    <property type="entry name" value="TRANSKETOLASE_2"/>
    <property type="match status" value="1"/>
</dbReference>
<evidence type="ECO:0000255" key="1">
    <source>
        <dbReference type="HAMAP-Rule" id="MF_00315"/>
    </source>
</evidence>
<proteinExistence type="inferred from homology"/>
<keyword id="KW-0414">Isoprene biosynthesis</keyword>
<keyword id="KW-0460">Magnesium</keyword>
<keyword id="KW-0479">Metal-binding</keyword>
<keyword id="KW-0784">Thiamine biosynthesis</keyword>
<keyword id="KW-0786">Thiamine pyrophosphate</keyword>
<keyword id="KW-0808">Transferase</keyword>
<name>DXS_ECO7I</name>
<sequence length="620" mass="67633">MSFDIAKYPTLALVDSTQELRLLPKESLPKLCDELRRYLLDSVSRSSGHFASGLGTVELTVALHYVYNTPFDQLIWDVGHQAYPHKILTGRRDKIGTIRQKGGLHPFPWRGESEYDVLSVGHSSTSISAGIGIAVAAEKEGKNRRTVCVIGDGAITAGMAFEAMNHAGDIRPDMLVVLNDNEMSISENVGALNNHLAQLLSGKLYSSLREGGKKVFSGVPPIKELLKRTEEHIKGMVVPGTLFEELGFNYIGPVDGHDVLGLITTLKNMRDLKGPQFLHIMTKKGRGYEPAEKDPITFHAVPKFDPSSGCLPKSSGGLPSYSKIFGDWLCETAAKDNKLMAITPAMREGSGMVEFSRKFPDRYFDVAIAEQHAVTFAAGLAIGGYKPIVAIYSTFLQRAYDQVLHDVAIQKLPVLFAIDRAGIVGADGQTHQGAFDLSYLRCIPEMVIMTPSDENECRQMLYTGYHYNDGPSAVRYPRGNAVGVELTPLEKLPIGKGIVKRRGEKLAILNFGTLMPEAAKVAESLNATLVDMRFVKPLDEALILEMAASHEALVTVEENAIMGGAGSGVNEVLMAHRKPVPVLNIGLPDFFIPQGTQEEMRAELGLDATGMEAKIKAWLA</sequence>
<organism>
    <name type="scientific">Escherichia coli O7:K1 (strain IAI39 / ExPEC)</name>
    <dbReference type="NCBI Taxonomy" id="585057"/>
    <lineage>
        <taxon>Bacteria</taxon>
        <taxon>Pseudomonadati</taxon>
        <taxon>Pseudomonadota</taxon>
        <taxon>Gammaproteobacteria</taxon>
        <taxon>Enterobacterales</taxon>
        <taxon>Enterobacteriaceae</taxon>
        <taxon>Escherichia</taxon>
    </lineage>
</organism>
<accession>B7NJ77</accession>
<gene>
    <name evidence="1" type="primary">dxs</name>
    <name type="ordered locus">ECIAI39_0256</name>
</gene>
<protein>
    <recommendedName>
        <fullName evidence="1">1-deoxy-D-xylulose-5-phosphate synthase</fullName>
        <ecNumber evidence="1">2.2.1.7</ecNumber>
    </recommendedName>
    <alternativeName>
        <fullName evidence="1">1-deoxyxylulose-5-phosphate synthase</fullName>
        <shortName evidence="1">DXP synthase</shortName>
        <shortName evidence="1">DXPS</shortName>
    </alternativeName>
</protein>
<comment type="function">
    <text evidence="1">Catalyzes the acyloin condensation reaction between C atoms 2 and 3 of pyruvate and glyceraldehyde 3-phosphate to yield 1-deoxy-D-xylulose-5-phosphate (DXP).</text>
</comment>
<comment type="catalytic activity">
    <reaction evidence="1">
        <text>D-glyceraldehyde 3-phosphate + pyruvate + H(+) = 1-deoxy-D-xylulose 5-phosphate + CO2</text>
        <dbReference type="Rhea" id="RHEA:12605"/>
        <dbReference type="ChEBI" id="CHEBI:15361"/>
        <dbReference type="ChEBI" id="CHEBI:15378"/>
        <dbReference type="ChEBI" id="CHEBI:16526"/>
        <dbReference type="ChEBI" id="CHEBI:57792"/>
        <dbReference type="ChEBI" id="CHEBI:59776"/>
        <dbReference type="EC" id="2.2.1.7"/>
    </reaction>
</comment>
<comment type="cofactor">
    <cofactor evidence="1">
        <name>Mg(2+)</name>
        <dbReference type="ChEBI" id="CHEBI:18420"/>
    </cofactor>
    <text evidence="1">Binds 1 Mg(2+) ion per subunit.</text>
</comment>
<comment type="cofactor">
    <cofactor evidence="1">
        <name>thiamine diphosphate</name>
        <dbReference type="ChEBI" id="CHEBI:58937"/>
    </cofactor>
    <text evidence="1">Binds 1 thiamine pyrophosphate per subunit.</text>
</comment>
<comment type="pathway">
    <text evidence="1">Metabolic intermediate biosynthesis; 1-deoxy-D-xylulose 5-phosphate biosynthesis; 1-deoxy-D-xylulose 5-phosphate from D-glyceraldehyde 3-phosphate and pyruvate: step 1/1.</text>
</comment>
<comment type="subunit">
    <text evidence="1">Homodimer.</text>
</comment>
<comment type="similarity">
    <text evidence="1">Belongs to the transketolase family. DXPS subfamily.</text>
</comment>